<keyword id="KW-0329">Glyoxylate bypass</keyword>
<keyword id="KW-0330">Glyoxysome</keyword>
<keyword id="KW-0456">Lyase</keyword>
<keyword id="KW-0460">Magnesium</keyword>
<keyword id="KW-0479">Metal-binding</keyword>
<keyword id="KW-0576">Peroxisome</keyword>
<keyword id="KW-1185">Reference proteome</keyword>
<keyword id="KW-0816">Tricarboxylic acid cycle</keyword>
<name>ACEA_EREGS</name>
<gene>
    <name evidence="1" type="primary">ICL1</name>
    <name type="ordered locus">ADL066C</name>
</gene>
<evidence type="ECO:0000250" key="1">
    <source>
        <dbReference type="UniProtKB" id="P28240"/>
    </source>
</evidence>
<evidence type="ECO:0000250" key="2">
    <source>
        <dbReference type="UniProtKB" id="P28299"/>
    </source>
</evidence>
<evidence type="ECO:0000250" key="3">
    <source>
        <dbReference type="UniProtKB" id="P9WKK7"/>
    </source>
</evidence>
<evidence type="ECO:0000255" key="4"/>
<evidence type="ECO:0000305" key="5"/>
<organism>
    <name type="scientific">Eremothecium gossypii (strain ATCC 10895 / CBS 109.51 / FGSC 9923 / NRRL Y-1056)</name>
    <name type="common">Yeast</name>
    <name type="synonym">Ashbya gossypii</name>
    <dbReference type="NCBI Taxonomy" id="284811"/>
    <lineage>
        <taxon>Eukaryota</taxon>
        <taxon>Fungi</taxon>
        <taxon>Dikarya</taxon>
        <taxon>Ascomycota</taxon>
        <taxon>Saccharomycotina</taxon>
        <taxon>Saccharomycetes</taxon>
        <taxon>Saccharomycetales</taxon>
        <taxon>Saccharomycetaceae</taxon>
        <taxon>Eremothecium</taxon>
    </lineage>
</organism>
<sequence>MSPSVRDARNDLASLQQQAAAEAEDIRRWWSQPRWAGTKRVYTAEDIVKRRGTFPVVEYPSSVMADKLVETLARHSRNGTVSQTFGVLDPVQMTQMVKYLDTIYVSGWQCSATASTSNEPGPDLADYPMDTVPNKVEHLFMAQLFHDRKQREARLSCTTQRELDQLGPEIDYLRPIVADADTGHGGLTAVFKLTKMFIERGAAGIHMEDQSSSNKKCGHMAGRCVIPVQEHISRLVTVRMCADVMHSNLVLVARTDSEAATLLSSNIDARDHYYIVGASNPEVTVPLIEVLDAAQQAGASGDRLAQLEEDWCKKAKLRLFHEAFADQVNASPSIKDKAGVIAKFNSQIGPQTGASIREMRKLGRELLGQDVYFDWDLPRAREGLYRYKGGTQCAIMRARAFAPYADLVWFESNFPDFQQAKEFAQGVREKFPNKWMAYNLSPSFNWPKAMPPKEQENYIQRLGEIGYVWQFITLAGLHTNALAIDNFSREFSRFGMRAYAQGIQQREMDEGVDVLKHQKWAGAEYVDSILKLAQGGVSSTASMGKGVTEEQFGSSNGAKL</sequence>
<feature type="chain" id="PRO_0000068782" description="Isocitrate lyase">
    <location>
        <begin position="1"/>
        <end position="560"/>
    </location>
</feature>
<feature type="short sequence motif" description="Microbody targeting signal" evidence="4">
    <location>
        <begin position="558"/>
        <end position="560"/>
    </location>
</feature>
<feature type="active site" description="Proton acceptor" evidence="3">
    <location>
        <position position="217"/>
    </location>
</feature>
<feature type="binding site" evidence="3">
    <location>
        <begin position="106"/>
        <end position="108"/>
    </location>
    <ligand>
        <name>substrate</name>
    </ligand>
</feature>
<feature type="binding site" evidence="3">
    <location>
        <position position="179"/>
    </location>
    <ligand>
        <name>Mg(2+)</name>
        <dbReference type="ChEBI" id="CHEBI:18420"/>
    </ligand>
</feature>
<feature type="binding site" evidence="3">
    <location>
        <begin position="218"/>
        <end position="219"/>
    </location>
    <ligand>
        <name>substrate</name>
    </ligand>
</feature>
<feature type="binding site" evidence="3">
    <location>
        <position position="254"/>
    </location>
    <ligand>
        <name>substrate</name>
    </ligand>
</feature>
<feature type="binding site" evidence="3">
    <location>
        <begin position="439"/>
        <end position="443"/>
    </location>
    <ligand>
        <name>substrate</name>
    </ligand>
</feature>
<feature type="binding site" evidence="3">
    <location>
        <position position="473"/>
    </location>
    <ligand>
        <name>substrate</name>
    </ligand>
</feature>
<reference key="1">
    <citation type="journal article" date="1999" name="FEBS Lett.">
        <title>Isocitrate lyase of Ashbya gossypii -- transcriptional regulation and peroxisomal localization.</title>
        <authorList>
            <person name="Maeting I."/>
            <person name="Schmidt G."/>
            <person name="Sahm H."/>
            <person name="Revuelta J.L."/>
            <person name="Stierhof Y.D."/>
            <person name="Stahmann K.-P."/>
        </authorList>
    </citation>
    <scope>NUCLEOTIDE SEQUENCE [GENOMIC DNA]</scope>
    <source>
        <strain>ATCC 10895 / CBS 109.51 / FGSC 9923 / NRRL Y-1056</strain>
    </source>
</reference>
<reference key="2">
    <citation type="journal article" date="2004" name="Science">
        <title>The Ashbya gossypii genome as a tool for mapping the ancient Saccharomyces cerevisiae genome.</title>
        <authorList>
            <person name="Dietrich F.S."/>
            <person name="Voegeli S."/>
            <person name="Brachat S."/>
            <person name="Lerch A."/>
            <person name="Gates K."/>
            <person name="Steiner S."/>
            <person name="Mohr C."/>
            <person name="Poehlmann R."/>
            <person name="Luedi P."/>
            <person name="Choi S."/>
            <person name="Wing R.A."/>
            <person name="Flavier A."/>
            <person name="Gaffney T.D."/>
            <person name="Philippsen P."/>
        </authorList>
    </citation>
    <scope>NUCLEOTIDE SEQUENCE [LARGE SCALE GENOMIC DNA]</scope>
    <source>
        <strain>ATCC 10895 / CBS 109.51 / FGSC 9923 / NRRL Y-1056</strain>
    </source>
</reference>
<reference key="3">
    <citation type="journal article" date="2013" name="G3 (Bethesda)">
        <title>Genomes of Ashbya fungi isolated from insects reveal four mating-type loci, numerous translocations, lack of transposons, and distinct gene duplications.</title>
        <authorList>
            <person name="Dietrich F.S."/>
            <person name="Voegeli S."/>
            <person name="Kuo S."/>
            <person name="Philippsen P."/>
        </authorList>
    </citation>
    <scope>GENOME REANNOTATION</scope>
    <source>
        <strain>ATCC 10895 / CBS 109.51 / FGSC 9923 / NRRL Y-1056</strain>
    </source>
</reference>
<comment type="function">
    <text evidence="1">Catalyzes the formation of succinate and glyoxylate from isocitrate, a key step of the glyoxylate cycle, which operates as an anaplerotic route for replenishing the tricarboxylic acid cycle. Required for growth on ethanol or acetate, but dispensable when fermentable carbon sources are available. Also acts on 2-methylisocitrate.</text>
</comment>
<comment type="catalytic activity">
    <reaction evidence="1">
        <text>D-threo-isocitrate = glyoxylate + succinate</text>
        <dbReference type="Rhea" id="RHEA:13245"/>
        <dbReference type="ChEBI" id="CHEBI:15562"/>
        <dbReference type="ChEBI" id="CHEBI:30031"/>
        <dbReference type="ChEBI" id="CHEBI:36655"/>
        <dbReference type="EC" id="4.1.3.1"/>
    </reaction>
</comment>
<comment type="catalytic activity">
    <reaction evidence="1">
        <text>(2S,3R)-3-hydroxybutane-1,2,3-tricarboxylate = pyruvate + succinate</text>
        <dbReference type="Rhea" id="RHEA:16809"/>
        <dbReference type="ChEBI" id="CHEBI:15361"/>
        <dbReference type="ChEBI" id="CHEBI:30031"/>
        <dbReference type="ChEBI" id="CHEBI:57429"/>
        <dbReference type="EC" id="4.1.3.30"/>
    </reaction>
</comment>
<comment type="cofactor">
    <cofactor evidence="3">
        <name>Mg(2+)</name>
        <dbReference type="ChEBI" id="CHEBI:18420"/>
    </cofactor>
</comment>
<comment type="pathway">
    <text>Carbohydrate metabolism; glyoxylate cycle; (S)-malate from isocitrate: step 1/2.</text>
</comment>
<comment type="subunit">
    <text evidence="1">Homotetramer.</text>
</comment>
<comment type="subcellular location">
    <subcellularLocation>
        <location evidence="2">Glyoxysome</location>
    </subcellularLocation>
</comment>
<comment type="similarity">
    <text evidence="5">Belongs to the isocitrate lyase/PEP mutase superfamily. Isocitrate lyase family.</text>
</comment>
<accession>O94198</accession>
<proteinExistence type="inferred from homology"/>
<dbReference type="EC" id="4.1.3.1" evidence="1"/>
<dbReference type="EC" id="4.1.3.30" evidence="1"/>
<dbReference type="EMBL" id="AJ010727">
    <property type="protein sequence ID" value="CAB37065.1"/>
    <property type="molecule type" value="Genomic_DNA"/>
</dbReference>
<dbReference type="EMBL" id="AE016817">
    <property type="protein sequence ID" value="AAS51854.1"/>
    <property type="molecule type" value="Genomic_DNA"/>
</dbReference>
<dbReference type="RefSeq" id="NP_984030.1">
    <property type="nucleotide sequence ID" value="NM_209383.1"/>
</dbReference>
<dbReference type="SMR" id="O94198"/>
<dbReference type="FunCoup" id="O94198">
    <property type="interactions" value="199"/>
</dbReference>
<dbReference type="STRING" id="284811.O94198"/>
<dbReference type="EnsemblFungi" id="AAS51854">
    <property type="protein sequence ID" value="AAS51854"/>
    <property type="gene ID" value="AGOS_ADL066C"/>
</dbReference>
<dbReference type="GeneID" id="4620172"/>
<dbReference type="KEGG" id="ago:AGOS_ADL066C"/>
<dbReference type="eggNOG" id="KOG1260">
    <property type="taxonomic scope" value="Eukaryota"/>
</dbReference>
<dbReference type="HOGENOM" id="CLU_019214_2_2_1"/>
<dbReference type="InParanoid" id="O94198"/>
<dbReference type="OMA" id="YVSGWQV"/>
<dbReference type="OrthoDB" id="4078635at2759"/>
<dbReference type="UniPathway" id="UPA00703">
    <property type="reaction ID" value="UER00719"/>
</dbReference>
<dbReference type="Proteomes" id="UP000000591">
    <property type="component" value="Chromosome IV"/>
</dbReference>
<dbReference type="GO" id="GO:0009514">
    <property type="term" value="C:glyoxysome"/>
    <property type="evidence" value="ECO:0007669"/>
    <property type="project" value="UniProtKB-SubCell"/>
</dbReference>
<dbReference type="GO" id="GO:0004451">
    <property type="term" value="F:isocitrate lyase activity"/>
    <property type="evidence" value="ECO:0000318"/>
    <property type="project" value="GO_Central"/>
</dbReference>
<dbReference type="GO" id="GO:0046872">
    <property type="term" value="F:metal ion binding"/>
    <property type="evidence" value="ECO:0007669"/>
    <property type="project" value="UniProtKB-KW"/>
</dbReference>
<dbReference type="GO" id="GO:0046421">
    <property type="term" value="F:methylisocitrate lyase activity"/>
    <property type="evidence" value="ECO:0007669"/>
    <property type="project" value="UniProtKB-EC"/>
</dbReference>
<dbReference type="GO" id="GO:0006097">
    <property type="term" value="P:glyoxylate cycle"/>
    <property type="evidence" value="ECO:0007669"/>
    <property type="project" value="UniProtKB-UniPathway"/>
</dbReference>
<dbReference type="GO" id="GO:0006099">
    <property type="term" value="P:tricarboxylic acid cycle"/>
    <property type="evidence" value="ECO:0007669"/>
    <property type="project" value="UniProtKB-KW"/>
</dbReference>
<dbReference type="CDD" id="cd00377">
    <property type="entry name" value="ICL_PEPM"/>
    <property type="match status" value="1"/>
</dbReference>
<dbReference type="FunFam" id="1.10.10.850:FF:000001">
    <property type="entry name" value="Isocitrate lyase"/>
    <property type="match status" value="1"/>
</dbReference>
<dbReference type="Gene3D" id="1.10.10.850">
    <property type="match status" value="1"/>
</dbReference>
<dbReference type="Gene3D" id="3.20.20.60">
    <property type="entry name" value="Phosphoenolpyruvate-binding domains"/>
    <property type="match status" value="1"/>
</dbReference>
<dbReference type="InterPro" id="IPR039556">
    <property type="entry name" value="ICL/PEPM"/>
</dbReference>
<dbReference type="InterPro" id="IPR006254">
    <property type="entry name" value="Isocitrate_lyase"/>
</dbReference>
<dbReference type="InterPro" id="IPR018523">
    <property type="entry name" value="Isocitrate_lyase_ph_CS"/>
</dbReference>
<dbReference type="InterPro" id="IPR015813">
    <property type="entry name" value="Pyrv/PenolPyrv_kinase-like_dom"/>
</dbReference>
<dbReference type="InterPro" id="IPR040442">
    <property type="entry name" value="Pyrv_kinase-like_dom_sf"/>
</dbReference>
<dbReference type="NCBIfam" id="TIGR01346">
    <property type="entry name" value="isocit_lyase"/>
    <property type="match status" value="1"/>
</dbReference>
<dbReference type="PANTHER" id="PTHR21631:SF3">
    <property type="entry name" value="BIFUNCTIONAL GLYOXYLATE CYCLE PROTEIN"/>
    <property type="match status" value="1"/>
</dbReference>
<dbReference type="PANTHER" id="PTHR21631">
    <property type="entry name" value="ISOCITRATE LYASE/MALATE SYNTHASE"/>
    <property type="match status" value="1"/>
</dbReference>
<dbReference type="Pfam" id="PF00463">
    <property type="entry name" value="ICL"/>
    <property type="match status" value="1"/>
</dbReference>
<dbReference type="PIRSF" id="PIRSF001362">
    <property type="entry name" value="Isocit_lyase"/>
    <property type="match status" value="1"/>
</dbReference>
<dbReference type="SUPFAM" id="SSF51621">
    <property type="entry name" value="Phosphoenolpyruvate/pyruvate domain"/>
    <property type="match status" value="1"/>
</dbReference>
<dbReference type="PROSITE" id="PS00161">
    <property type="entry name" value="ISOCITRATE_LYASE"/>
    <property type="match status" value="1"/>
</dbReference>
<protein>
    <recommendedName>
        <fullName evidence="1">Isocitrate lyase</fullName>
        <shortName evidence="5">ICL</shortName>
        <shortName evidence="5">Isocitrase</shortName>
        <shortName evidence="5">Isocitratase</shortName>
        <ecNumber evidence="1">4.1.3.1</ecNumber>
    </recommendedName>
    <alternativeName>
        <fullName evidence="1">Methylisocitrate lyase</fullName>
        <shortName evidence="5">MICA</shortName>
        <ecNumber evidence="1">4.1.3.30</ecNumber>
    </alternativeName>
    <alternativeName>
        <fullName evidence="5">Threo-D(S)-isocitrate glyoxylate-lyase</fullName>
    </alternativeName>
</protein>